<gene>
    <name type="primary">ROCK2</name>
    <name type="synonym">KIAA0619</name>
</gene>
<organism>
    <name type="scientific">Homo sapiens</name>
    <name type="common">Human</name>
    <dbReference type="NCBI Taxonomy" id="9606"/>
    <lineage>
        <taxon>Eukaryota</taxon>
        <taxon>Metazoa</taxon>
        <taxon>Chordata</taxon>
        <taxon>Craniata</taxon>
        <taxon>Vertebrata</taxon>
        <taxon>Euteleostomi</taxon>
        <taxon>Mammalia</taxon>
        <taxon>Eutheria</taxon>
        <taxon>Euarchontoglires</taxon>
        <taxon>Primates</taxon>
        <taxon>Haplorrhini</taxon>
        <taxon>Catarrhini</taxon>
        <taxon>Hominidae</taxon>
        <taxon>Homo</taxon>
    </lineage>
</organism>
<comment type="function">
    <text evidence="14 15 16 17 20 21 24 25">Protein kinase which is a key regulator of actin cytoskeleton and cell polarity. Involved in regulation of smooth muscle contraction, actin cytoskeleton organization, stress fiber and focal adhesion formation, neurite retraction, cell adhesion and motility via phosphorylation of ADD1, BRCA2, CNN1, EZR, DPYSL2, EP300, MSN, MYL9/MLC2, NPM1, RDX, PPP1R12A and VIM. Phosphorylates SORL1 and IRF4. Acts as a negative regulator of VEGF-induced angiogenic endothelial cell activation. Positively regulates the activation of p42/MAPK1-p44/MAPK3 and of p90RSK/RPS6KA1 during myogenic differentiation. Plays an important role in the timely initiation of centrosome duplication. Inhibits keratinocyte terminal differentiation. May regulate closure of the eyelids and ventral body wall through organization of actomyosin bundles. Plays a critical role in the regulation of spine and synaptic properties in the hippocampus. Plays an important role in generating the circadian rhythm of the aortic myofilament Ca(2+) sensitivity and vascular contractility by modulating the myosin light chain phosphorylation.</text>
</comment>
<comment type="catalytic activity">
    <reaction>
        <text>L-seryl-[protein] + ATP = O-phospho-L-seryl-[protein] + ADP + H(+)</text>
        <dbReference type="Rhea" id="RHEA:17989"/>
        <dbReference type="Rhea" id="RHEA-COMP:9863"/>
        <dbReference type="Rhea" id="RHEA-COMP:11604"/>
        <dbReference type="ChEBI" id="CHEBI:15378"/>
        <dbReference type="ChEBI" id="CHEBI:29999"/>
        <dbReference type="ChEBI" id="CHEBI:30616"/>
        <dbReference type="ChEBI" id="CHEBI:83421"/>
        <dbReference type="ChEBI" id="CHEBI:456216"/>
        <dbReference type="EC" id="2.7.11.1"/>
    </reaction>
</comment>
<comment type="catalytic activity">
    <reaction>
        <text>L-threonyl-[protein] + ATP = O-phospho-L-threonyl-[protein] + ADP + H(+)</text>
        <dbReference type="Rhea" id="RHEA:46608"/>
        <dbReference type="Rhea" id="RHEA-COMP:11060"/>
        <dbReference type="Rhea" id="RHEA-COMP:11605"/>
        <dbReference type="ChEBI" id="CHEBI:15378"/>
        <dbReference type="ChEBI" id="CHEBI:30013"/>
        <dbReference type="ChEBI" id="CHEBI:30616"/>
        <dbReference type="ChEBI" id="CHEBI:61977"/>
        <dbReference type="ChEBI" id="CHEBI:456216"/>
        <dbReference type="EC" id="2.7.11.1"/>
    </reaction>
</comment>
<comment type="cofactor">
    <cofactor evidence="1">
        <name>Mg(2+)</name>
        <dbReference type="ChEBI" id="CHEBI:18420"/>
    </cofactor>
</comment>
<comment type="activity regulation">
    <text evidence="1">Activated by RHOA binding. Inhibited by Y-27632 (By similarity).</text>
</comment>
<comment type="subunit">
    <text evidence="2 3 4 14 16 17 20 22 24 25">Homodimer (By similarity). Interacts with IRS1 (By similarity). Interacts with RAF1 (By similarity). Interacts with RHOA (activated by GTP), RHOB and RHOC (By similarity). Interacts with PPP1R12A (PubMed:10579722, PubMed:19131646). Interacts with EP300 (PubMed:16574662). Interacts with CHORDC1 (PubMed:20230755). Interacts with BRCA2 (PubMed:21084279). Interacts with NPM1; this interaction enhances ROCK2 activity (PubMed:17015463). Interacts with SORL1 (PubMed:21147781). Interacts with PJVK (By similarity).</text>
</comment>
<comment type="interaction">
    <interactant intactId="EBI-366288">
        <id>O75116</id>
    </interactant>
    <interactant intactId="EBI-77613">
        <id>P05067</id>
        <label>APP</label>
    </interactant>
    <organismsDiffer>false</organismsDiffer>
    <experiments>6</experiments>
</comment>
<comment type="interaction">
    <interactant intactId="EBI-366288">
        <id>O75116</id>
    </interactant>
    <interactant intactId="EBI-518647">
        <id>O60674</id>
        <label>JAK2</label>
    </interactant>
    <organismsDiffer>false</organismsDiffer>
    <experiments>2</experiments>
</comment>
<comment type="interaction">
    <interactant intactId="EBI-366288">
        <id>O75116</id>
    </interactant>
    <interactant intactId="EBI-518675">
        <id>P40763</id>
        <label>STAT3</label>
    </interactant>
    <organismsDiffer>false</organismsDiffer>
    <experiments>3</experiments>
</comment>
<comment type="subcellular location">
    <subcellularLocation>
        <location>Cytoplasm</location>
    </subcellularLocation>
    <subcellularLocation>
        <location evidence="1">Cell membrane</location>
        <topology evidence="1">Peripheral membrane protein</topology>
    </subcellularLocation>
    <subcellularLocation>
        <location>Nucleus</location>
    </subcellularLocation>
    <subcellularLocation>
        <location>Cytoplasm</location>
        <location>Cytoskeleton</location>
        <location>Microtubule organizing center</location>
        <location>Centrosome</location>
    </subcellularLocation>
    <text evidence="1">Cytoplasmic, and associated with actin microfilaments and the plasma membrane.</text>
</comment>
<comment type="tissue specificity">
    <text evidence="25">Expressed in the brain (at protein level).</text>
</comment>
<comment type="domain">
    <text evidence="1">An interaction between Thr-414 and Asp-48 is essential for kinase activity and dimerization.</text>
</comment>
<comment type="PTM">
    <text evidence="19 23">Phosphorylation at Tyr-722 reduces its binding to RHOA and is crucial for focal adhesion dynamics. Dephosphorylation by PTPN11 stimulates its RHOA binding activity.</text>
</comment>
<comment type="PTM">
    <text>Cleaved by granzyme B during apoptosis. This leads to constitutive activation of the kinase and membrane blebbing.</text>
</comment>
<comment type="similarity">
    <text evidence="28">Belongs to the protein kinase superfamily. AGC Ser/Thr protein kinase family.</text>
</comment>
<comment type="sequence caution" evidence="28">
    <conflict type="erroneous gene model prediction">
        <sequence resource="EMBL-CDS" id="AAX93049"/>
    </conflict>
</comment>
<comment type="sequence caution" evidence="28">
    <conflict type="erroneous initiation">
        <sequence resource="EMBL-CDS" id="BAA31594"/>
    </conflict>
    <text>Extended N-terminus.</text>
</comment>
<comment type="online information" name="Atlas of Genetics and Cytogenetics in Oncology and Haematology">
    <link uri="https://atlasgeneticsoncology.org/gene/43474/ROCK2"/>
</comment>
<protein>
    <recommendedName>
        <fullName>Rho-associated protein kinase 2</fullName>
        <ecNumber>2.7.11.1</ecNumber>
    </recommendedName>
    <alternativeName>
        <fullName>Rho kinase 2</fullName>
    </alternativeName>
    <alternativeName>
        <fullName>Rho-associated, coiled-coil-containing protein kinase 2</fullName>
    </alternativeName>
    <alternativeName>
        <fullName>Rho-associated, coiled-coil-containing protein kinase II</fullName>
        <shortName>ROCK-II</shortName>
    </alternativeName>
    <alternativeName>
        <fullName>p164 ROCK-2</fullName>
    </alternativeName>
</protein>
<keyword id="KW-0002">3D-structure</keyword>
<keyword id="KW-0067">ATP-binding</keyword>
<keyword id="KW-0090">Biological rhythms</keyword>
<keyword id="KW-1003">Cell membrane</keyword>
<keyword id="KW-0175">Coiled coil</keyword>
<keyword id="KW-0963">Cytoplasm</keyword>
<keyword id="KW-0206">Cytoskeleton</keyword>
<keyword id="KW-0418">Kinase</keyword>
<keyword id="KW-0460">Magnesium</keyword>
<keyword id="KW-0472">Membrane</keyword>
<keyword id="KW-0479">Metal-binding</keyword>
<keyword id="KW-0547">Nucleotide-binding</keyword>
<keyword id="KW-0539">Nucleus</keyword>
<keyword id="KW-0597">Phosphoprotein</keyword>
<keyword id="KW-1267">Proteomics identification</keyword>
<keyword id="KW-1185">Reference proteome</keyword>
<keyword id="KW-0723">Serine/threonine-protein kinase</keyword>
<keyword id="KW-0808">Transferase</keyword>
<keyword id="KW-0862">Zinc</keyword>
<keyword id="KW-0863">Zinc-finger</keyword>
<reference key="1">
    <citation type="journal article" date="1999" name="Genomics">
        <title>Localization of the gene coding for ROCK II/Rho kinase on human chromosome 2p24.</title>
        <authorList>
            <person name="Takahashi N."/>
            <person name="Tuiki H."/>
            <person name="Saya H."/>
            <person name="Kaibuchi K."/>
        </authorList>
    </citation>
    <scope>NUCLEOTIDE SEQUENCE [MRNA]</scope>
    <scope>VARIANT ASN-431</scope>
    <source>
        <tissue>Brain</tissue>
    </source>
</reference>
<reference key="2">
    <citation type="journal article" date="1998" name="DNA Res.">
        <title>Prediction of the coding sequences of unidentified human genes. X. The complete sequences of 100 new cDNA clones from brain which can code for large proteins in vitro.</title>
        <authorList>
            <person name="Ishikawa K."/>
            <person name="Nagase T."/>
            <person name="Suyama M."/>
            <person name="Miyajima N."/>
            <person name="Tanaka A."/>
            <person name="Kotani H."/>
            <person name="Nomura N."/>
            <person name="Ohara O."/>
        </authorList>
    </citation>
    <scope>NUCLEOTIDE SEQUENCE [LARGE SCALE MRNA]</scope>
    <scope>VARIANT ASN-431</scope>
    <source>
        <tissue>Brain</tissue>
    </source>
</reference>
<reference key="3">
    <citation type="journal article" date="2005" name="Nature">
        <title>Generation and annotation of the DNA sequences of human chromosomes 2 and 4.</title>
        <authorList>
            <person name="Hillier L.W."/>
            <person name="Graves T.A."/>
            <person name="Fulton R.S."/>
            <person name="Fulton L.A."/>
            <person name="Pepin K.H."/>
            <person name="Minx P."/>
            <person name="Wagner-McPherson C."/>
            <person name="Layman D."/>
            <person name="Wylie K."/>
            <person name="Sekhon M."/>
            <person name="Becker M.C."/>
            <person name="Fewell G.A."/>
            <person name="Delehaunty K.D."/>
            <person name="Miner T.L."/>
            <person name="Nash W.E."/>
            <person name="Kremitzki C."/>
            <person name="Oddy L."/>
            <person name="Du H."/>
            <person name="Sun H."/>
            <person name="Bradshaw-Cordum H."/>
            <person name="Ali J."/>
            <person name="Carter J."/>
            <person name="Cordes M."/>
            <person name="Harris A."/>
            <person name="Isak A."/>
            <person name="van Brunt A."/>
            <person name="Nguyen C."/>
            <person name="Du F."/>
            <person name="Courtney L."/>
            <person name="Kalicki J."/>
            <person name="Ozersky P."/>
            <person name="Abbott S."/>
            <person name="Armstrong J."/>
            <person name="Belter E.A."/>
            <person name="Caruso L."/>
            <person name="Cedroni M."/>
            <person name="Cotton M."/>
            <person name="Davidson T."/>
            <person name="Desai A."/>
            <person name="Elliott G."/>
            <person name="Erb T."/>
            <person name="Fronick C."/>
            <person name="Gaige T."/>
            <person name="Haakenson W."/>
            <person name="Haglund K."/>
            <person name="Holmes A."/>
            <person name="Harkins R."/>
            <person name="Kim K."/>
            <person name="Kruchowski S.S."/>
            <person name="Strong C.M."/>
            <person name="Grewal N."/>
            <person name="Goyea E."/>
            <person name="Hou S."/>
            <person name="Levy A."/>
            <person name="Martinka S."/>
            <person name="Mead K."/>
            <person name="McLellan M.D."/>
            <person name="Meyer R."/>
            <person name="Randall-Maher J."/>
            <person name="Tomlinson C."/>
            <person name="Dauphin-Kohlberg S."/>
            <person name="Kozlowicz-Reilly A."/>
            <person name="Shah N."/>
            <person name="Swearengen-Shahid S."/>
            <person name="Snider J."/>
            <person name="Strong J.T."/>
            <person name="Thompson J."/>
            <person name="Yoakum M."/>
            <person name="Leonard S."/>
            <person name="Pearman C."/>
            <person name="Trani L."/>
            <person name="Radionenko M."/>
            <person name="Waligorski J.E."/>
            <person name="Wang C."/>
            <person name="Rock S.M."/>
            <person name="Tin-Wollam A.-M."/>
            <person name="Maupin R."/>
            <person name="Latreille P."/>
            <person name="Wendl M.C."/>
            <person name="Yang S.-P."/>
            <person name="Pohl C."/>
            <person name="Wallis J.W."/>
            <person name="Spieth J."/>
            <person name="Bieri T.A."/>
            <person name="Berkowicz N."/>
            <person name="Nelson J.O."/>
            <person name="Osborne J."/>
            <person name="Ding L."/>
            <person name="Meyer R."/>
            <person name="Sabo A."/>
            <person name="Shotland Y."/>
            <person name="Sinha P."/>
            <person name="Wohldmann P.E."/>
            <person name="Cook L.L."/>
            <person name="Hickenbotham M.T."/>
            <person name="Eldred J."/>
            <person name="Williams D."/>
            <person name="Jones T.A."/>
            <person name="She X."/>
            <person name="Ciccarelli F.D."/>
            <person name="Izaurralde E."/>
            <person name="Taylor J."/>
            <person name="Schmutz J."/>
            <person name="Myers R.M."/>
            <person name="Cox D.R."/>
            <person name="Huang X."/>
            <person name="McPherson J.D."/>
            <person name="Mardis E.R."/>
            <person name="Clifton S.W."/>
            <person name="Warren W.C."/>
            <person name="Chinwalla A.T."/>
            <person name="Eddy S.R."/>
            <person name="Marra M.A."/>
            <person name="Ovcharenko I."/>
            <person name="Furey T.S."/>
            <person name="Miller W."/>
            <person name="Eichler E.E."/>
            <person name="Bork P."/>
            <person name="Suyama M."/>
            <person name="Torrents D."/>
            <person name="Waterston R.H."/>
            <person name="Wilson R.K."/>
        </authorList>
    </citation>
    <scope>NUCLEOTIDE SEQUENCE [LARGE SCALE GENOMIC DNA]</scope>
</reference>
<reference key="4">
    <citation type="journal article" date="1999" name="J. Cell Biol.">
        <title>Phosphorylation of myosin-binding subunit (MBS) of myosin phosphatase by Rho-kinase in vivo.</title>
        <authorList>
            <person name="Kawano Y."/>
            <person name="Fukata Y."/>
            <person name="Oshiro N."/>
            <person name="Amano M."/>
            <person name="Nakamura T."/>
            <person name="Ito M."/>
            <person name="Matsumura F."/>
            <person name="Inagaki M."/>
            <person name="Kaibuchi K."/>
        </authorList>
    </citation>
    <scope>FUNCTION</scope>
    <scope>INTERACTION WITH PPP1R12A</scope>
</reference>
<reference key="5">
    <citation type="journal article" date="2005" name="J. Exp. Med.">
        <title>Direct cleavage of ROCK II by granzyme B induces target cell membrane blebbing in a caspase-independent manner.</title>
        <authorList>
            <person name="Sebbagh M."/>
            <person name="Hamelin J."/>
            <person name="Bertoglio J."/>
            <person name="Solary E."/>
            <person name="Breard J."/>
        </authorList>
    </citation>
    <scope>CLEAVAGE BY GRANZYME B</scope>
    <scope>MUTAGENESIS OF ASP-1131</scope>
    <scope>FUNCTION</scope>
</reference>
<reference key="6">
    <citation type="journal article" date="2006" name="J. Biol. Chem.">
        <title>Nuclear Rho kinase, ROCK2, targets p300 acetyltransferase.</title>
        <authorList>
            <person name="Tanaka T."/>
            <person name="Nishimura D."/>
            <person name="Wu R.C."/>
            <person name="Amano M."/>
            <person name="Iso T."/>
            <person name="Kedes L."/>
            <person name="Nishida H."/>
            <person name="Kaibuchi K."/>
            <person name="Hamamori Y."/>
        </authorList>
    </citation>
    <scope>FUNCTION</scope>
    <scope>SUBCELLULAR LOCATION</scope>
    <scope>INTERACTION WITH EP300</scope>
</reference>
<reference key="7">
    <citation type="journal article" date="2006" name="Mol. Cell. Biol.">
        <title>Interaction between ROCK II and nucleophosmin/B23 in the regulation of centrosome duplication.</title>
        <authorList>
            <person name="Ma Z."/>
            <person name="Kanai M."/>
            <person name="Kawamura K."/>
            <person name="Kaibuchi K."/>
            <person name="Ye K."/>
            <person name="Fukasawa K."/>
        </authorList>
    </citation>
    <scope>FUNCTION</scope>
    <scope>SUBCELLULAR LOCATION</scope>
    <scope>INTERACTION WITH NPM1</scope>
</reference>
<reference key="8">
    <citation type="journal article" date="2008" name="J. Cell Biol.">
        <title>Regulation of RhoA-dependent ROCKII activation by Shp2.</title>
        <authorList>
            <person name="Lee H.H."/>
            <person name="Chang Z.F."/>
        </authorList>
    </citation>
    <scope>PHOSPHORYLATION AT TYR-722</scope>
    <scope>DEPHOSPHORYLATION</scope>
</reference>
<reference key="9">
    <citation type="journal article" date="2008" name="Mol. Cell">
        <title>Kinase-selective enrichment enables quantitative phosphoproteomics of the kinome across the cell cycle.</title>
        <authorList>
            <person name="Daub H."/>
            <person name="Olsen J.V."/>
            <person name="Bairlein M."/>
            <person name="Gnad F."/>
            <person name="Oppermann F.S."/>
            <person name="Korner R."/>
            <person name="Greff Z."/>
            <person name="Keri G."/>
            <person name="Stemmann O."/>
            <person name="Mann M."/>
        </authorList>
    </citation>
    <scope>PHOSPHORYLATION [LARGE SCALE ANALYSIS] AT SER-1137</scope>
    <scope>IDENTIFICATION BY MASS SPECTROMETRY [LARGE SCALE ANALYSIS]</scope>
    <source>
        <tissue>Cervix carcinoma</tissue>
    </source>
</reference>
<reference key="10">
    <citation type="journal article" date="2008" name="Proc. Natl. Acad. Sci. U.S.A.">
        <title>A quantitative atlas of mitotic phosphorylation.</title>
        <authorList>
            <person name="Dephoure N."/>
            <person name="Zhou C."/>
            <person name="Villen J."/>
            <person name="Beausoleil S.A."/>
            <person name="Bakalarski C.E."/>
            <person name="Elledge S.J."/>
            <person name="Gygi S.P."/>
        </authorList>
    </citation>
    <scope>PHOSPHORYLATION [LARGE SCALE ANALYSIS] AT SER-1137</scope>
    <scope>IDENTIFICATION BY MASS SPECTROMETRY [LARGE SCALE ANALYSIS]</scope>
    <source>
        <tissue>Cervix carcinoma</tissue>
    </source>
</reference>
<reference key="11">
    <citation type="journal article" date="2009" name="Circ. Res.">
        <title>ROCK isoform regulation of myosin phosphatase and contractility in vascular smooth muscle cells.</title>
        <authorList>
            <person name="Wang Y."/>
            <person name="Zheng X.R."/>
            <person name="Riddick N."/>
            <person name="Bryden M."/>
            <person name="Baur W."/>
            <person name="Zhang X."/>
            <person name="Surks H.K."/>
        </authorList>
    </citation>
    <scope>FUNCTION</scope>
    <scope>INTERACTION WITH PPP1R12A</scope>
</reference>
<reference key="12">
    <citation type="journal article" date="2009" name="PLoS ONE">
        <title>Distinct roles for ROCK1 and ROCK2 in the regulation of keratinocyte differentiation.</title>
        <authorList>
            <person name="Lock F.E."/>
            <person name="Hotchin N.A."/>
        </authorList>
    </citation>
    <scope>FUNCTION</scope>
</reference>
<reference key="13">
    <citation type="journal article" date="2009" name="Sci. Signal.">
        <title>Quantitative phosphoproteomic analysis of T cell receptor signaling reveals system-wide modulation of protein-protein interactions.</title>
        <authorList>
            <person name="Mayya V."/>
            <person name="Lundgren D.H."/>
            <person name="Hwang S.-I."/>
            <person name="Rezaul K."/>
            <person name="Wu L."/>
            <person name="Eng J.K."/>
            <person name="Rodionov V."/>
            <person name="Han D.K."/>
        </authorList>
    </citation>
    <scope>PHOSPHORYLATION [LARGE SCALE ANALYSIS] AT SER-1137</scope>
    <scope>IDENTIFICATION BY MASS SPECTROMETRY [LARGE SCALE ANALYSIS]</scope>
    <source>
        <tissue>Leukemic T-cell</tissue>
    </source>
</reference>
<reference key="14">
    <citation type="journal article" date="2010" name="Dev. Cell">
        <title>Morgana/chp-1, a ROCK inhibitor involved in centrosome duplication and tumorigenesis.</title>
        <authorList>
            <person name="Ferretti R."/>
            <person name="Palumbo V."/>
            <person name="Di Savino A."/>
            <person name="Velasco S."/>
            <person name="Sbroggio M."/>
            <person name="Sportoletti P."/>
            <person name="Micale L."/>
            <person name="Turco E."/>
            <person name="Silengo L."/>
            <person name="Palumbo G."/>
            <person name="Hirsch E."/>
            <person name="Teruya-Feldstein J."/>
            <person name="Bonaccorsi S."/>
            <person name="Pandolfi P.P."/>
            <person name="Gatti M."/>
            <person name="Tarone G."/>
            <person name="Brancaccio M."/>
        </authorList>
    </citation>
    <scope>INTERACTION WITH CHORDC1</scope>
</reference>
<reference key="15">
    <citation type="journal article" date="2010" name="J. Cell Sci.">
        <title>Src-dependent phosphorylation of ROCK participates in regulation of focal adhesion dynamics.</title>
        <authorList>
            <person name="Lee H.H."/>
            <person name="Tien S.C."/>
            <person name="Jou T.S."/>
            <person name="Chang Y.C."/>
            <person name="Jhong J.G."/>
            <person name="Chang Z.F."/>
        </authorList>
    </citation>
    <scope>PHOSPHORYLATION AT TYR-722</scope>
</reference>
<reference key="16">
    <citation type="journal article" date="2010" name="Sci. Signal.">
        <title>Quantitative phosphoproteomics reveals widespread full phosphorylation site occupancy during mitosis.</title>
        <authorList>
            <person name="Olsen J.V."/>
            <person name="Vermeulen M."/>
            <person name="Santamaria A."/>
            <person name="Kumar C."/>
            <person name="Miller M.L."/>
            <person name="Jensen L.J."/>
            <person name="Gnad F."/>
            <person name="Cox J."/>
            <person name="Jensen T.S."/>
            <person name="Nigg E.A."/>
            <person name="Brunak S."/>
            <person name="Mann M."/>
        </authorList>
    </citation>
    <scope>PHOSPHORYLATION [LARGE SCALE ANALYSIS] AT SER-1137</scope>
    <scope>IDENTIFICATION BY MASS SPECTROMETRY [LARGE SCALE ANALYSIS]</scope>
    <source>
        <tissue>Cervix carcinoma</tissue>
    </source>
</reference>
<reference key="17">
    <citation type="journal article" date="2011" name="BMC Syst. Biol.">
        <title>Initial characterization of the human central proteome.</title>
        <authorList>
            <person name="Burkard T.R."/>
            <person name="Planyavsky M."/>
            <person name="Kaupe I."/>
            <person name="Breitwieser F.P."/>
            <person name="Buerckstuemmer T."/>
            <person name="Bennett K.L."/>
            <person name="Superti-Furga G."/>
            <person name="Colinge J."/>
        </authorList>
    </citation>
    <scope>IDENTIFICATION BY MASS SPECTROMETRY [LARGE SCALE ANALYSIS]</scope>
</reference>
<reference key="18">
    <citation type="journal article" date="2011" name="Cancer Res.">
        <title>BRCA2 and nucleophosmin coregulate centrosome amplification and form a complex with the Rho effector kinase ROCK2.</title>
        <authorList>
            <person name="Wang H.F."/>
            <person name="Takenaka K."/>
            <person name="Nakanishi A."/>
            <person name="Miki Y."/>
        </authorList>
    </citation>
    <scope>FUNCTION</scope>
    <scope>INTERACTION WITH BRCA2</scope>
</reference>
<reference key="19">
    <citation type="journal article" date="2011" name="J. Biol. Chem.">
        <title>Rho kinase II phosphorylation of the lipoprotein receptor LR11/SORLA alters amyloid-beta production.</title>
        <authorList>
            <person name="Herskowitz J.H."/>
            <person name="Seyfried N.T."/>
            <person name="Gearing M."/>
            <person name="Kahn R.A."/>
            <person name="Peng J."/>
            <person name="Levey A.I."/>
            <person name="Lah J.J."/>
        </authorList>
    </citation>
    <scope>FUNCTION</scope>
    <scope>INTERACTION WITH SORL1</scope>
    <scope>TISSUE SPECIFICITY</scope>
</reference>
<reference key="20">
    <citation type="journal article" date="2003" name="Nat. Rev. Mol. Cell Biol.">
        <title>Rocks: multifunctional kinases in cell behaviour.</title>
        <authorList>
            <person name="Riento K."/>
            <person name="Ridley A.J."/>
        </authorList>
    </citation>
    <scope>REVIEW</scope>
</reference>
<reference key="21">
    <citation type="journal article" date="2010" name="Cytoskeleton">
        <title>Rho-kinase/ROCK: A key regulator of the cytoskeleton and cell polarity.</title>
        <authorList>
            <person name="Amano M."/>
            <person name="Nakayama M."/>
            <person name="Kaibuchi K."/>
        </authorList>
    </citation>
    <scope>REVIEW</scope>
</reference>
<reference key="22">
    <citation type="journal article" date="2011" name="Sci. Signal.">
        <title>System-wide temporal characterization of the proteome and phosphoproteome of human embryonic stem cell differentiation.</title>
        <authorList>
            <person name="Rigbolt K.T."/>
            <person name="Prokhorova T.A."/>
            <person name="Akimov V."/>
            <person name="Henningsen J."/>
            <person name="Johansen P.T."/>
            <person name="Kratchmarova I."/>
            <person name="Kassem M."/>
            <person name="Mann M."/>
            <person name="Olsen J.V."/>
            <person name="Blagoev B."/>
        </authorList>
    </citation>
    <scope>PHOSPHORYLATION [LARGE SCALE ANALYSIS] AT SER-1137</scope>
    <scope>IDENTIFICATION BY MASS SPECTROMETRY [LARGE SCALE ANALYSIS]</scope>
</reference>
<reference key="23">
    <citation type="journal article" date="2013" name="J. Proteome Res.">
        <title>Toward a comprehensive characterization of a human cancer cell phosphoproteome.</title>
        <authorList>
            <person name="Zhou H."/>
            <person name="Di Palma S."/>
            <person name="Preisinger C."/>
            <person name="Peng M."/>
            <person name="Polat A.N."/>
            <person name="Heck A.J."/>
            <person name="Mohammed S."/>
        </authorList>
    </citation>
    <scope>PHOSPHORYLATION [LARGE SCALE ANALYSIS] AT THR-1212; SER-1362 AND SER-1374</scope>
    <scope>IDENTIFICATION BY MASS SPECTROMETRY [LARGE SCALE ANALYSIS]</scope>
    <source>
        <tissue>Cervix carcinoma</tissue>
        <tissue>Erythroleukemia</tissue>
    </source>
</reference>
<reference key="24">
    <citation type="journal article" date="2014" name="J. Proteomics">
        <title>An enzyme assisted RP-RPLC approach for in-depth analysis of human liver phosphoproteome.</title>
        <authorList>
            <person name="Bian Y."/>
            <person name="Song C."/>
            <person name="Cheng K."/>
            <person name="Dong M."/>
            <person name="Wang F."/>
            <person name="Huang J."/>
            <person name="Sun D."/>
            <person name="Wang L."/>
            <person name="Ye M."/>
            <person name="Zou H."/>
        </authorList>
    </citation>
    <scope>IDENTIFICATION BY MASS SPECTROMETRY [LARGE SCALE ANALYSIS]</scope>
    <source>
        <tissue>Liver</tissue>
    </source>
</reference>
<reference key="25">
    <citation type="journal article" date="2015" name="Proteomics">
        <title>N-terminome analysis of the human mitochondrial proteome.</title>
        <authorList>
            <person name="Vaca Jacome A.S."/>
            <person name="Rabilloud T."/>
            <person name="Schaeffer-Reiss C."/>
            <person name="Rompais M."/>
            <person name="Ayoub D."/>
            <person name="Lane L."/>
            <person name="Bairoch A."/>
            <person name="Van Dorsselaer A."/>
            <person name="Carapito C."/>
        </authorList>
    </citation>
    <scope>IDENTIFICATION BY MASS SPECTROMETRY [LARGE SCALE ANALYSIS]</scope>
</reference>
<reference key="26">
    <citation type="journal article" date="2007" name="Nature">
        <title>Patterns of somatic mutation in human cancer genomes.</title>
        <authorList>
            <person name="Greenman C."/>
            <person name="Stephens P."/>
            <person name="Smith R."/>
            <person name="Dalgliesh G.L."/>
            <person name="Hunter C."/>
            <person name="Bignell G."/>
            <person name="Davies H."/>
            <person name="Teague J."/>
            <person name="Butler A."/>
            <person name="Stevens C."/>
            <person name="Edkins S."/>
            <person name="O'Meara S."/>
            <person name="Vastrik I."/>
            <person name="Schmidt E.E."/>
            <person name="Avis T."/>
            <person name="Barthorpe S."/>
            <person name="Bhamra G."/>
            <person name="Buck G."/>
            <person name="Choudhury B."/>
            <person name="Clements J."/>
            <person name="Cole J."/>
            <person name="Dicks E."/>
            <person name="Forbes S."/>
            <person name="Gray K."/>
            <person name="Halliday K."/>
            <person name="Harrison R."/>
            <person name="Hills K."/>
            <person name="Hinton J."/>
            <person name="Jenkinson A."/>
            <person name="Jones D."/>
            <person name="Menzies A."/>
            <person name="Mironenko T."/>
            <person name="Perry J."/>
            <person name="Raine K."/>
            <person name="Richardson D."/>
            <person name="Shepherd R."/>
            <person name="Small A."/>
            <person name="Tofts C."/>
            <person name="Varian J."/>
            <person name="Webb T."/>
            <person name="West S."/>
            <person name="Widaa S."/>
            <person name="Yates A."/>
            <person name="Cahill D.P."/>
            <person name="Louis D.N."/>
            <person name="Goldstraw P."/>
            <person name="Nicholson A.G."/>
            <person name="Brasseur F."/>
            <person name="Looijenga L."/>
            <person name="Weber B.L."/>
            <person name="Chiew Y.-E."/>
            <person name="DeFazio A."/>
            <person name="Greaves M.F."/>
            <person name="Green A.R."/>
            <person name="Campbell P."/>
            <person name="Birney E."/>
            <person name="Easton D.F."/>
            <person name="Chenevix-Trench G."/>
            <person name="Tan M.-H."/>
            <person name="Khoo S.K."/>
            <person name="Teh B.T."/>
            <person name="Yuen S.T."/>
            <person name="Leung S.Y."/>
            <person name="Wooster R."/>
            <person name="Futreal P.A."/>
            <person name="Stratton M.R."/>
        </authorList>
    </citation>
    <scope>VARIANTS [LARGE SCALE ANALYSIS] ASN-431; VAL-601 AND PRO-1194</scope>
</reference>
<proteinExistence type="evidence at protein level"/>
<dbReference type="EC" id="2.7.11.1"/>
<dbReference type="EMBL" id="D87931">
    <property type="protein sequence ID" value="BAA75636.1"/>
    <property type="molecule type" value="mRNA"/>
</dbReference>
<dbReference type="EMBL" id="AB014519">
    <property type="protein sequence ID" value="BAA31594.2"/>
    <property type="status" value="ALT_INIT"/>
    <property type="molecule type" value="mRNA"/>
</dbReference>
<dbReference type="EMBL" id="AC018463">
    <property type="protein sequence ID" value="AAX93049.1"/>
    <property type="status" value="ALT_SEQ"/>
    <property type="molecule type" value="Genomic_DNA"/>
</dbReference>
<dbReference type="EMBL" id="AC099344">
    <property type="protein sequence ID" value="AAY14825.1"/>
    <property type="molecule type" value="Genomic_DNA"/>
</dbReference>
<dbReference type="CCDS" id="CCDS42654.1"/>
<dbReference type="RefSeq" id="NP_001308572.1">
    <property type="nucleotide sequence ID" value="NM_001321643.1"/>
</dbReference>
<dbReference type="RefSeq" id="NP_004841.2">
    <property type="nucleotide sequence ID" value="NM_004850.4"/>
</dbReference>
<dbReference type="PDB" id="4L6Q">
    <property type="method" value="X-ray"/>
    <property type="resolution" value="2.79 A"/>
    <property type="chains" value="A/B=19-417"/>
</dbReference>
<dbReference type="PDB" id="4WOT">
    <property type="method" value="X-ray"/>
    <property type="resolution" value="2.93 A"/>
    <property type="chains" value="A/B/C/D=22-417"/>
</dbReference>
<dbReference type="PDB" id="5U7Q">
    <property type="method" value="X-ray"/>
    <property type="resolution" value="3.15 A"/>
    <property type="chains" value="A/B/C/D=23-417"/>
</dbReference>
<dbReference type="PDB" id="5U7R">
    <property type="method" value="X-ray"/>
    <property type="resolution" value="3.33 A"/>
    <property type="chains" value="A/B/C/D=23-417"/>
</dbReference>
<dbReference type="PDB" id="6ED6">
    <property type="method" value="X-ray"/>
    <property type="resolution" value="2.86 A"/>
    <property type="chains" value="A/B=27-417"/>
</dbReference>
<dbReference type="PDB" id="6P5M">
    <property type="method" value="X-ray"/>
    <property type="resolution" value="2.65 A"/>
    <property type="chains" value="A/B/C/D=18-417"/>
</dbReference>
<dbReference type="PDB" id="6P5P">
    <property type="method" value="X-ray"/>
    <property type="resolution" value="3.30 A"/>
    <property type="chains" value="A/B/C/D=18-417"/>
</dbReference>
<dbReference type="PDB" id="7JNT">
    <property type="method" value="X-ray"/>
    <property type="resolution" value="2.21 A"/>
    <property type="chains" value="A/B/C/D/E/F/G/H=19-417"/>
</dbReference>
<dbReference type="PDB" id="7JOV">
    <property type="method" value="X-ray"/>
    <property type="resolution" value="2.59 A"/>
    <property type="chains" value="A/B/C/D/E/F/G/H=23-417"/>
</dbReference>
<dbReference type="PDB" id="7P6N">
    <property type="method" value="X-ray"/>
    <property type="resolution" value="3.00 A"/>
    <property type="chains" value="A/B/C/D/E/F/G/H=19-417"/>
</dbReference>
<dbReference type="PDB" id="8GDS">
    <property type="method" value="X-ray"/>
    <property type="resolution" value="2.71 A"/>
    <property type="chains" value="A/B/C/D=22-417"/>
</dbReference>
<dbReference type="PDB" id="8X8X">
    <property type="method" value="X-ray"/>
    <property type="resolution" value="2.60 A"/>
    <property type="chains" value="A/B=27-417"/>
</dbReference>
<dbReference type="PDB" id="8X8Y">
    <property type="method" value="X-ray"/>
    <property type="resolution" value="3.20 A"/>
    <property type="chains" value="A/B=27-417"/>
</dbReference>
<dbReference type="PDB" id="8X8Z">
    <property type="method" value="X-ray"/>
    <property type="resolution" value="2.70 A"/>
    <property type="chains" value="A/B=27-417"/>
</dbReference>
<dbReference type="PDB" id="8X92">
    <property type="method" value="X-ray"/>
    <property type="resolution" value="2.20 A"/>
    <property type="chains" value="A/B=27-417"/>
</dbReference>
<dbReference type="PDB" id="9EP8">
    <property type="method" value="X-ray"/>
    <property type="resolution" value="2.63 A"/>
    <property type="chains" value="A/B/C/D=19-417"/>
</dbReference>
<dbReference type="PDBsum" id="4L6Q"/>
<dbReference type="PDBsum" id="4WOT"/>
<dbReference type="PDBsum" id="5U7Q"/>
<dbReference type="PDBsum" id="5U7R"/>
<dbReference type="PDBsum" id="6ED6"/>
<dbReference type="PDBsum" id="6P5M"/>
<dbReference type="PDBsum" id="6P5P"/>
<dbReference type="PDBsum" id="7JNT"/>
<dbReference type="PDBsum" id="7JOV"/>
<dbReference type="PDBsum" id="7P6N"/>
<dbReference type="PDBsum" id="8GDS"/>
<dbReference type="PDBsum" id="8X8X"/>
<dbReference type="PDBsum" id="8X8Y"/>
<dbReference type="PDBsum" id="8X8Z"/>
<dbReference type="PDBsum" id="8X92"/>
<dbReference type="PDBsum" id="9EP8"/>
<dbReference type="SMR" id="O75116"/>
<dbReference type="BioGRID" id="114860">
    <property type="interactions" value="165"/>
</dbReference>
<dbReference type="CORUM" id="O75116"/>
<dbReference type="FunCoup" id="O75116">
    <property type="interactions" value="2833"/>
</dbReference>
<dbReference type="IntAct" id="O75116">
    <property type="interactions" value="67"/>
</dbReference>
<dbReference type="MINT" id="O75116"/>
<dbReference type="STRING" id="9606.ENSP00000317985"/>
<dbReference type="BindingDB" id="O75116"/>
<dbReference type="ChEMBL" id="CHEMBL2973"/>
<dbReference type="DrugBank" id="DB16703">
    <property type="generic name" value="Belumosudil"/>
</dbReference>
<dbReference type="DrugBank" id="DB08162">
    <property type="generic name" value="Fasudil"/>
</dbReference>
<dbReference type="DrugBank" id="DB12010">
    <property type="generic name" value="Fostamatinib"/>
</dbReference>
<dbReference type="DrugBank" id="DB13931">
    <property type="generic name" value="Netarsudil"/>
</dbReference>
<dbReference type="DrugBank" id="DB13165">
    <property type="generic name" value="Ripasudil"/>
</dbReference>
<dbReference type="DrugBank" id="DB08756">
    <property type="generic name" value="Y-27632"/>
</dbReference>
<dbReference type="DrugCentral" id="O75116"/>
<dbReference type="GuidetoPHARMACOLOGY" id="1504"/>
<dbReference type="GlyGen" id="O75116">
    <property type="glycosylation" value="7 sites, 1 O-linked glycan (6 sites)"/>
</dbReference>
<dbReference type="iPTMnet" id="O75116"/>
<dbReference type="MetOSite" id="O75116"/>
<dbReference type="PhosphoSitePlus" id="O75116"/>
<dbReference type="SwissPalm" id="O75116"/>
<dbReference type="BioMuta" id="ROCK2"/>
<dbReference type="CPTAC" id="CPTAC-3097"/>
<dbReference type="jPOST" id="O75116"/>
<dbReference type="MassIVE" id="O75116"/>
<dbReference type="PaxDb" id="9606-ENSP00000317985"/>
<dbReference type="PeptideAtlas" id="O75116"/>
<dbReference type="ProteomicsDB" id="49773"/>
<dbReference type="Pumba" id="O75116"/>
<dbReference type="Antibodypedia" id="2077">
    <property type="antibodies" value="714 antibodies from 45 providers"/>
</dbReference>
<dbReference type="DNASU" id="9475"/>
<dbReference type="Ensembl" id="ENST00000315872.11">
    <property type="protein sequence ID" value="ENSP00000317985.6"/>
    <property type="gene ID" value="ENSG00000134318.16"/>
</dbReference>
<dbReference type="GeneID" id="9475"/>
<dbReference type="KEGG" id="hsa:9475"/>
<dbReference type="MANE-Select" id="ENST00000315872.11">
    <property type="protein sequence ID" value="ENSP00000317985.6"/>
    <property type="RefSeq nucleotide sequence ID" value="NM_004850.5"/>
    <property type="RefSeq protein sequence ID" value="NP_004841.2"/>
</dbReference>
<dbReference type="UCSC" id="uc002rbd.2">
    <property type="organism name" value="human"/>
</dbReference>
<dbReference type="AGR" id="HGNC:10252"/>
<dbReference type="CTD" id="9475"/>
<dbReference type="DisGeNET" id="9475"/>
<dbReference type="GeneCards" id="ROCK2"/>
<dbReference type="HGNC" id="HGNC:10252">
    <property type="gene designation" value="ROCK2"/>
</dbReference>
<dbReference type="HPA" id="ENSG00000134318">
    <property type="expression patterns" value="Low tissue specificity"/>
</dbReference>
<dbReference type="MIM" id="604002">
    <property type="type" value="gene"/>
</dbReference>
<dbReference type="neXtProt" id="NX_O75116"/>
<dbReference type="OpenTargets" id="ENSG00000134318"/>
<dbReference type="PharmGKB" id="PA34624"/>
<dbReference type="VEuPathDB" id="HostDB:ENSG00000134318"/>
<dbReference type="eggNOG" id="KOG0612">
    <property type="taxonomic scope" value="Eukaryota"/>
</dbReference>
<dbReference type="GeneTree" id="ENSGT01030000234517"/>
<dbReference type="HOGENOM" id="CLU_000288_140_0_1"/>
<dbReference type="InParanoid" id="O75116"/>
<dbReference type="OMA" id="MRVQANT"/>
<dbReference type="OrthoDB" id="3638488at2759"/>
<dbReference type="PAN-GO" id="O75116">
    <property type="GO annotations" value="11 GO annotations based on evolutionary models"/>
</dbReference>
<dbReference type="PhylomeDB" id="O75116"/>
<dbReference type="TreeFam" id="TF313551"/>
<dbReference type="PathwayCommons" id="O75116"/>
<dbReference type="Reactome" id="R-HSA-3928662">
    <property type="pathway name" value="EPHB-mediated forward signaling"/>
</dbReference>
<dbReference type="Reactome" id="R-HSA-3928663">
    <property type="pathway name" value="EPHA-mediated growth cone collapse"/>
</dbReference>
<dbReference type="Reactome" id="R-HSA-416482">
    <property type="pathway name" value="G alpha (12/13) signalling events"/>
</dbReference>
<dbReference type="Reactome" id="R-HSA-416572">
    <property type="pathway name" value="Sema4D induced cell migration and growth-cone collapse"/>
</dbReference>
<dbReference type="Reactome" id="R-HSA-4420097">
    <property type="pathway name" value="VEGFA-VEGFR2 Pathway"/>
</dbReference>
<dbReference type="Reactome" id="R-HSA-5627117">
    <property type="pathway name" value="RHO GTPases Activate ROCKs"/>
</dbReference>
<dbReference type="Reactome" id="R-HSA-8980692">
    <property type="pathway name" value="RHOA GTPase cycle"/>
</dbReference>
<dbReference type="Reactome" id="R-HSA-9013026">
    <property type="pathway name" value="RHOB GTPase cycle"/>
</dbReference>
<dbReference type="Reactome" id="R-HSA-9013106">
    <property type="pathway name" value="RHOC GTPase cycle"/>
</dbReference>
<dbReference type="Reactome" id="R-HSA-9013407">
    <property type="pathway name" value="RHOH GTPase cycle"/>
</dbReference>
<dbReference type="Reactome" id="R-HSA-9013422">
    <property type="pathway name" value="RHOBTB1 GTPase cycle"/>
</dbReference>
<dbReference type="Reactome" id="R-HSA-9679191">
    <property type="pathway name" value="Potential therapeutics for SARS"/>
</dbReference>
<dbReference type="SignaLink" id="O75116"/>
<dbReference type="SIGNOR" id="O75116"/>
<dbReference type="BioGRID-ORCS" id="9475">
    <property type="hits" value="44 hits in 1208 CRISPR screens"/>
</dbReference>
<dbReference type="CD-CODE" id="8C2F96ED">
    <property type="entry name" value="Centrosome"/>
</dbReference>
<dbReference type="CD-CODE" id="FB4E32DD">
    <property type="entry name" value="Presynaptic clusters and postsynaptic densities"/>
</dbReference>
<dbReference type="ChiTaRS" id="ROCK2">
    <property type="organism name" value="human"/>
</dbReference>
<dbReference type="EvolutionaryTrace" id="O75116"/>
<dbReference type="GenomeRNAi" id="9475"/>
<dbReference type="Pharos" id="O75116">
    <property type="development level" value="Tclin"/>
</dbReference>
<dbReference type="PRO" id="PR:O75116"/>
<dbReference type="Proteomes" id="UP000005640">
    <property type="component" value="Chromosome 2"/>
</dbReference>
<dbReference type="RNAct" id="O75116">
    <property type="molecule type" value="protein"/>
</dbReference>
<dbReference type="Bgee" id="ENSG00000134318">
    <property type="expression patterns" value="Expressed in calcaneal tendon and 200 other cell types or tissues"/>
</dbReference>
<dbReference type="ExpressionAtlas" id="O75116">
    <property type="expression patterns" value="baseline and differential"/>
</dbReference>
<dbReference type="GO" id="GO:0005813">
    <property type="term" value="C:centrosome"/>
    <property type="evidence" value="ECO:0000314"/>
    <property type="project" value="UniProtKB"/>
</dbReference>
<dbReference type="GO" id="GO:0005737">
    <property type="term" value="C:cytoplasm"/>
    <property type="evidence" value="ECO:0000314"/>
    <property type="project" value="UniProt"/>
</dbReference>
<dbReference type="GO" id="GO:0036464">
    <property type="term" value="C:cytoplasmic ribonucleoprotein granule"/>
    <property type="evidence" value="ECO:0000314"/>
    <property type="project" value="ParkinsonsUK-UCL"/>
</dbReference>
<dbReference type="GO" id="GO:0005856">
    <property type="term" value="C:cytoskeleton"/>
    <property type="evidence" value="ECO:0000318"/>
    <property type="project" value="GO_Central"/>
</dbReference>
<dbReference type="GO" id="GO:0005829">
    <property type="term" value="C:cytosol"/>
    <property type="evidence" value="ECO:0000314"/>
    <property type="project" value="HPA"/>
</dbReference>
<dbReference type="GO" id="GO:0005634">
    <property type="term" value="C:nucleus"/>
    <property type="evidence" value="ECO:0007669"/>
    <property type="project" value="UniProtKB-SubCell"/>
</dbReference>
<dbReference type="GO" id="GO:0005886">
    <property type="term" value="C:plasma membrane"/>
    <property type="evidence" value="ECO:0007669"/>
    <property type="project" value="UniProtKB-SubCell"/>
</dbReference>
<dbReference type="GO" id="GO:0005524">
    <property type="term" value="F:ATP binding"/>
    <property type="evidence" value="ECO:0007669"/>
    <property type="project" value="UniProtKB-KW"/>
</dbReference>
<dbReference type="GO" id="GO:0061133">
    <property type="term" value="F:endopeptidase activator activity"/>
    <property type="evidence" value="ECO:0000315"/>
    <property type="project" value="ARUK-UCL"/>
</dbReference>
<dbReference type="GO" id="GO:0002020">
    <property type="term" value="F:protease binding"/>
    <property type="evidence" value="ECO:0000353"/>
    <property type="project" value="ARUK-UCL"/>
</dbReference>
<dbReference type="GO" id="GO:0106310">
    <property type="term" value="F:protein serine kinase activity"/>
    <property type="evidence" value="ECO:0007669"/>
    <property type="project" value="RHEA"/>
</dbReference>
<dbReference type="GO" id="GO:0004674">
    <property type="term" value="F:protein serine/threonine kinase activity"/>
    <property type="evidence" value="ECO:0000314"/>
    <property type="project" value="UniProtKB"/>
</dbReference>
<dbReference type="GO" id="GO:0072518">
    <property type="term" value="F:Rho-dependent protein serine/threonine kinase activity"/>
    <property type="evidence" value="ECO:0000315"/>
    <property type="project" value="UniProtKB"/>
</dbReference>
<dbReference type="GO" id="GO:0003723">
    <property type="term" value="F:RNA binding"/>
    <property type="evidence" value="ECO:0007005"/>
    <property type="project" value="UniProtKB"/>
</dbReference>
<dbReference type="GO" id="GO:0031267">
    <property type="term" value="F:small GTPase binding"/>
    <property type="evidence" value="ECO:0007669"/>
    <property type="project" value="InterPro"/>
</dbReference>
<dbReference type="GO" id="GO:0005198">
    <property type="term" value="F:structural molecule activity"/>
    <property type="evidence" value="ECO:0000303"/>
    <property type="project" value="ProtInc"/>
</dbReference>
<dbReference type="GO" id="GO:0048156">
    <property type="term" value="F:tau protein binding"/>
    <property type="evidence" value="ECO:0000303"/>
    <property type="project" value="ARUK-UCL"/>
</dbReference>
<dbReference type="GO" id="GO:0050321">
    <property type="term" value="F:tau-protein kinase activity"/>
    <property type="evidence" value="ECO:0000303"/>
    <property type="project" value="ARUK-UCL"/>
</dbReference>
<dbReference type="GO" id="GO:0008270">
    <property type="term" value="F:zinc ion binding"/>
    <property type="evidence" value="ECO:0007669"/>
    <property type="project" value="UniProtKB-KW"/>
</dbReference>
<dbReference type="GO" id="GO:0030036">
    <property type="term" value="P:actin cytoskeleton organization"/>
    <property type="evidence" value="ECO:0000250"/>
    <property type="project" value="BHF-UCL"/>
</dbReference>
<dbReference type="GO" id="GO:0031032">
    <property type="term" value="P:actomyosin structure organization"/>
    <property type="evidence" value="ECO:0000318"/>
    <property type="project" value="GO_Central"/>
</dbReference>
<dbReference type="GO" id="GO:0003180">
    <property type="term" value="P:aortic valve morphogenesis"/>
    <property type="evidence" value="ECO:0000250"/>
    <property type="project" value="BHF-UCL"/>
</dbReference>
<dbReference type="GO" id="GO:0097746">
    <property type="term" value="P:blood vessel diameter maintenance"/>
    <property type="evidence" value="ECO:0000250"/>
    <property type="project" value="ARUK-UCL"/>
</dbReference>
<dbReference type="GO" id="GO:1905145">
    <property type="term" value="P:cellular response to acetylcholine"/>
    <property type="evidence" value="ECO:0000250"/>
    <property type="project" value="ARUK-UCL"/>
</dbReference>
<dbReference type="GO" id="GO:0071394">
    <property type="term" value="P:cellular response to testosterone stimulus"/>
    <property type="evidence" value="ECO:0000315"/>
    <property type="project" value="UniProtKB"/>
</dbReference>
<dbReference type="GO" id="GO:0051298">
    <property type="term" value="P:centrosome duplication"/>
    <property type="evidence" value="ECO:0000315"/>
    <property type="project" value="UniProtKB"/>
</dbReference>
<dbReference type="GO" id="GO:0030866">
    <property type="term" value="P:cortical actin cytoskeleton organization"/>
    <property type="evidence" value="ECO:0000318"/>
    <property type="project" value="GO_Central"/>
</dbReference>
<dbReference type="GO" id="GO:0048598">
    <property type="term" value="P:embryonic morphogenesis"/>
    <property type="evidence" value="ECO:0000318"/>
    <property type="project" value="GO_Central"/>
</dbReference>
<dbReference type="GO" id="GO:0001837">
    <property type="term" value="P:epithelial to mesenchymal transition"/>
    <property type="evidence" value="ECO:0000250"/>
    <property type="project" value="BHF-UCL"/>
</dbReference>
<dbReference type="GO" id="GO:0000281">
    <property type="term" value="P:mitotic cytokinesis"/>
    <property type="evidence" value="ECO:0000318"/>
    <property type="project" value="GO_Central"/>
</dbReference>
<dbReference type="GO" id="GO:0044788">
    <property type="term" value="P:modulation by host of viral process"/>
    <property type="evidence" value="ECO:0000315"/>
    <property type="project" value="ParkinsonsUK-UCL"/>
</dbReference>
<dbReference type="GO" id="GO:0061157">
    <property type="term" value="P:mRNA destabilization"/>
    <property type="evidence" value="ECO:0000250"/>
    <property type="project" value="ARUK-UCL"/>
</dbReference>
<dbReference type="GO" id="GO:0016525">
    <property type="term" value="P:negative regulation of angiogenesis"/>
    <property type="evidence" value="ECO:0000315"/>
    <property type="project" value="UniProtKB"/>
</dbReference>
<dbReference type="GO" id="GO:1903347">
    <property type="term" value="P:negative regulation of bicellular tight junction assembly"/>
    <property type="evidence" value="ECO:0000316"/>
    <property type="project" value="UniProtKB"/>
</dbReference>
<dbReference type="GO" id="GO:0070168">
    <property type="term" value="P:negative regulation of biomineral tissue development"/>
    <property type="evidence" value="ECO:0000250"/>
    <property type="project" value="BHF-UCL"/>
</dbReference>
<dbReference type="GO" id="GO:0010629">
    <property type="term" value="P:negative regulation of gene expression"/>
    <property type="evidence" value="ECO:0000250"/>
    <property type="project" value="ARUK-UCL"/>
</dbReference>
<dbReference type="GO" id="GO:0045019">
    <property type="term" value="P:negative regulation of nitric oxide biosynthetic process"/>
    <property type="evidence" value="ECO:0000315"/>
    <property type="project" value="ARUK-UCL"/>
</dbReference>
<dbReference type="GO" id="GO:0150033">
    <property type="term" value="P:negative regulation of protein localization to lysosome"/>
    <property type="evidence" value="ECO:0000315"/>
    <property type="project" value="ARUK-UCL"/>
</dbReference>
<dbReference type="GO" id="GO:1902993">
    <property type="term" value="P:positive regulation of amyloid precursor protein catabolic process"/>
    <property type="evidence" value="ECO:0000315"/>
    <property type="project" value="ARUK-UCL"/>
</dbReference>
<dbReference type="GO" id="GO:1902004">
    <property type="term" value="P:positive regulation of amyloid-beta formation"/>
    <property type="evidence" value="ECO:0000315"/>
    <property type="project" value="ARUK-UCL"/>
</dbReference>
<dbReference type="GO" id="GO:0010613">
    <property type="term" value="P:positive regulation of cardiac muscle hypertrophy"/>
    <property type="evidence" value="ECO:0000250"/>
    <property type="project" value="ARUK-UCL"/>
</dbReference>
<dbReference type="GO" id="GO:0030335">
    <property type="term" value="P:positive regulation of cell migration"/>
    <property type="evidence" value="ECO:0000315"/>
    <property type="project" value="BHF-UCL"/>
</dbReference>
<dbReference type="GO" id="GO:0010825">
    <property type="term" value="P:positive regulation of centrosome duplication"/>
    <property type="evidence" value="ECO:0007669"/>
    <property type="project" value="InterPro"/>
</dbReference>
<dbReference type="GO" id="GO:0032723">
    <property type="term" value="P:positive regulation of connective tissue growth factor production"/>
    <property type="evidence" value="ECO:0000250"/>
    <property type="project" value="ARUK-UCL"/>
</dbReference>
<dbReference type="GO" id="GO:1905205">
    <property type="term" value="P:positive regulation of connective tissue replacement"/>
    <property type="evidence" value="ECO:0000250"/>
    <property type="project" value="ARUK-UCL"/>
</dbReference>
<dbReference type="GO" id="GO:0010595">
    <property type="term" value="P:positive regulation of endothelial cell migration"/>
    <property type="evidence" value="ECO:0000315"/>
    <property type="project" value="UniProtKB"/>
</dbReference>
<dbReference type="GO" id="GO:0090271">
    <property type="term" value="P:positive regulation of fibroblast growth factor production"/>
    <property type="evidence" value="ECO:0000250"/>
    <property type="project" value="ARUK-UCL"/>
</dbReference>
<dbReference type="GO" id="GO:0010628">
    <property type="term" value="P:positive regulation of gene expression"/>
    <property type="evidence" value="ECO:0000315"/>
    <property type="project" value="UniProtKB"/>
</dbReference>
<dbReference type="GO" id="GO:0043410">
    <property type="term" value="P:positive regulation of MAPK cascade"/>
    <property type="evidence" value="ECO:0000250"/>
    <property type="project" value="ARUK-UCL"/>
</dbReference>
<dbReference type="GO" id="GO:1902966">
    <property type="term" value="P:positive regulation of protein localization to early endosome"/>
    <property type="evidence" value="ECO:0000315"/>
    <property type="project" value="ARUK-UCL"/>
</dbReference>
<dbReference type="GO" id="GO:0001934">
    <property type="term" value="P:positive regulation of protein phosphorylation"/>
    <property type="evidence" value="ECO:0000315"/>
    <property type="project" value="UniProtKB"/>
</dbReference>
<dbReference type="GO" id="GO:0051496">
    <property type="term" value="P:positive regulation of stress fiber assembly"/>
    <property type="evidence" value="ECO:0000314"/>
    <property type="project" value="UniProt"/>
</dbReference>
<dbReference type="GO" id="GO:0072659">
    <property type="term" value="P:protein localization to plasma membrane"/>
    <property type="evidence" value="ECO:0000315"/>
    <property type="project" value="UniProtKB"/>
</dbReference>
<dbReference type="GO" id="GO:0006468">
    <property type="term" value="P:protein phosphorylation"/>
    <property type="evidence" value="ECO:0000314"/>
    <property type="project" value="UniProtKB"/>
</dbReference>
<dbReference type="GO" id="GO:0032956">
    <property type="term" value="P:regulation of actin cytoskeleton organization"/>
    <property type="evidence" value="ECO:0000318"/>
    <property type="project" value="GO_Central"/>
</dbReference>
<dbReference type="GO" id="GO:0110061">
    <property type="term" value="P:regulation of angiotensin-activated signaling pathway"/>
    <property type="evidence" value="ECO:0000250"/>
    <property type="project" value="ARUK-UCL"/>
</dbReference>
<dbReference type="GO" id="GO:0030155">
    <property type="term" value="P:regulation of cell adhesion"/>
    <property type="evidence" value="ECO:0000304"/>
    <property type="project" value="UniProtKB"/>
</dbReference>
<dbReference type="GO" id="GO:1901888">
    <property type="term" value="P:regulation of cell junction assembly"/>
    <property type="evidence" value="ECO:0000318"/>
    <property type="project" value="GO_Central"/>
</dbReference>
<dbReference type="GO" id="GO:2000145">
    <property type="term" value="P:regulation of cell motility"/>
    <property type="evidence" value="ECO:0000304"/>
    <property type="project" value="UniProtKB"/>
</dbReference>
<dbReference type="GO" id="GO:1900037">
    <property type="term" value="P:regulation of cellular response to hypoxia"/>
    <property type="evidence" value="ECO:0000250"/>
    <property type="project" value="ARUK-UCL"/>
</dbReference>
<dbReference type="GO" id="GO:0042752">
    <property type="term" value="P:regulation of circadian rhythm"/>
    <property type="evidence" value="ECO:0000250"/>
    <property type="project" value="UniProtKB"/>
</dbReference>
<dbReference type="GO" id="GO:2000114">
    <property type="term" value="P:regulation of establishment of cell polarity"/>
    <property type="evidence" value="ECO:0000304"/>
    <property type="project" value="UniProtKB"/>
</dbReference>
<dbReference type="GO" id="GO:1903140">
    <property type="term" value="P:regulation of establishment of endothelial barrier"/>
    <property type="evidence" value="ECO:0000315"/>
    <property type="project" value="UniProtKB"/>
</dbReference>
<dbReference type="GO" id="GO:0051893">
    <property type="term" value="P:regulation of focal adhesion assembly"/>
    <property type="evidence" value="ECO:0000304"/>
    <property type="project" value="UniProtKB"/>
</dbReference>
<dbReference type="GO" id="GO:0045616">
    <property type="term" value="P:regulation of keratinocyte differentiation"/>
    <property type="evidence" value="ECO:0000315"/>
    <property type="project" value="UniProtKB"/>
</dbReference>
<dbReference type="GO" id="GO:0031644">
    <property type="term" value="P:regulation of nervous system process"/>
    <property type="evidence" value="ECO:0000250"/>
    <property type="project" value="ARUK-UCL"/>
</dbReference>
<dbReference type="GO" id="GO:0051492">
    <property type="term" value="P:regulation of stress fiber assembly"/>
    <property type="evidence" value="ECO:0000304"/>
    <property type="project" value="UniProtKB"/>
</dbReference>
<dbReference type="GO" id="GO:1990776">
    <property type="term" value="P:response to angiotensin"/>
    <property type="evidence" value="ECO:0000250"/>
    <property type="project" value="ARUK-UCL"/>
</dbReference>
<dbReference type="GO" id="GO:0002931">
    <property type="term" value="P:response to ischemia"/>
    <property type="evidence" value="ECO:0000250"/>
    <property type="project" value="ARUK-UCL"/>
</dbReference>
<dbReference type="GO" id="GO:0071559">
    <property type="term" value="P:response to transforming growth factor beta"/>
    <property type="evidence" value="ECO:0000250"/>
    <property type="project" value="ARUK-UCL"/>
</dbReference>
<dbReference type="GO" id="GO:0007266">
    <property type="term" value="P:Rho protein signal transduction"/>
    <property type="evidence" value="ECO:0000314"/>
    <property type="project" value="UniProt"/>
</dbReference>
<dbReference type="GO" id="GO:0048511">
    <property type="term" value="P:rhythmic process"/>
    <property type="evidence" value="ECO:0007669"/>
    <property type="project" value="UniProtKB-KW"/>
</dbReference>
<dbReference type="GO" id="GO:0006939">
    <property type="term" value="P:smooth muscle contraction"/>
    <property type="evidence" value="ECO:0000304"/>
    <property type="project" value="UniProtKB"/>
</dbReference>
<dbReference type="CDD" id="cd20875">
    <property type="entry name" value="C1_ROCK2"/>
    <property type="match status" value="1"/>
</dbReference>
<dbReference type="CDD" id="cd11638">
    <property type="entry name" value="HR1_ROCK2"/>
    <property type="match status" value="1"/>
</dbReference>
<dbReference type="CDD" id="cd01242">
    <property type="entry name" value="PH_ROCK"/>
    <property type="match status" value="1"/>
</dbReference>
<dbReference type="CDD" id="cd22250">
    <property type="entry name" value="ROCK_SBD"/>
    <property type="match status" value="1"/>
</dbReference>
<dbReference type="CDD" id="cd05621">
    <property type="entry name" value="STKc_ROCK2"/>
    <property type="match status" value="1"/>
</dbReference>
<dbReference type="FunFam" id="1.10.510.10:FF:000047">
    <property type="entry name" value="Rho-associated protein kinase 1"/>
    <property type="match status" value="1"/>
</dbReference>
<dbReference type="FunFam" id="3.30.60.20:FF:000036">
    <property type="entry name" value="Rho-associated protein kinase 1"/>
    <property type="match status" value="1"/>
</dbReference>
<dbReference type="FunFam" id="1.20.5.340:FF:000016">
    <property type="entry name" value="Rho-associated protein kinase 2"/>
    <property type="match status" value="1"/>
</dbReference>
<dbReference type="FunFam" id="2.30.29.30:FF:000033">
    <property type="entry name" value="Rho-associated protein kinase 2"/>
    <property type="match status" value="1"/>
</dbReference>
<dbReference type="FunFam" id="3.30.200.20:FF:000072">
    <property type="entry name" value="Rho-associated protein kinase 2"/>
    <property type="match status" value="1"/>
</dbReference>
<dbReference type="FunFam" id="1.20.5.730:FF:000001">
    <property type="entry name" value="rho-associated protein kinase 2"/>
    <property type="match status" value="1"/>
</dbReference>
<dbReference type="FunFam" id="3.30.200.20:FF:001759">
    <property type="entry name" value="Rho-associated, coiled-coil-containing protein kinase 2b"/>
    <property type="match status" value="1"/>
</dbReference>
<dbReference type="Gene3D" id="1.20.5.340">
    <property type="match status" value="1"/>
</dbReference>
<dbReference type="Gene3D" id="3.30.60.20">
    <property type="match status" value="1"/>
</dbReference>
<dbReference type="Gene3D" id="3.30.200.20">
    <property type="entry name" value="Phosphorylase Kinase, domain 1"/>
    <property type="match status" value="1"/>
</dbReference>
<dbReference type="Gene3D" id="2.30.29.30">
    <property type="entry name" value="Pleckstrin-homology domain (PH domain)/Phosphotyrosine-binding domain (PTB)"/>
    <property type="match status" value="1"/>
</dbReference>
<dbReference type="Gene3D" id="1.20.5.730">
    <property type="entry name" value="Single helix bin"/>
    <property type="match status" value="1"/>
</dbReference>
<dbReference type="Gene3D" id="1.10.510.10">
    <property type="entry name" value="Transferase(Phosphotransferase) domain 1"/>
    <property type="match status" value="1"/>
</dbReference>
<dbReference type="InterPro" id="IPR000961">
    <property type="entry name" value="AGC-kinase_C"/>
</dbReference>
<dbReference type="InterPro" id="IPR046349">
    <property type="entry name" value="C1-like_sf"/>
</dbReference>
<dbReference type="InterPro" id="IPR011072">
    <property type="entry name" value="HR1_rho-bd"/>
</dbReference>
<dbReference type="InterPro" id="IPR011009">
    <property type="entry name" value="Kinase-like_dom_sf"/>
</dbReference>
<dbReference type="InterPro" id="IPR002219">
    <property type="entry name" value="PE/DAG-bd"/>
</dbReference>
<dbReference type="InterPro" id="IPR011993">
    <property type="entry name" value="PH-like_dom_sf"/>
</dbReference>
<dbReference type="InterPro" id="IPR001849">
    <property type="entry name" value="PH_domain"/>
</dbReference>
<dbReference type="InterPro" id="IPR000719">
    <property type="entry name" value="Prot_kinase_dom"/>
</dbReference>
<dbReference type="InterPro" id="IPR017441">
    <property type="entry name" value="Protein_kinase_ATP_BS"/>
</dbReference>
<dbReference type="InterPro" id="IPR050839">
    <property type="entry name" value="Rho-assoc_Ser/Thr_Kinase"/>
</dbReference>
<dbReference type="InterPro" id="IPR020684">
    <property type="entry name" value="ROCK1/ROCK2"/>
</dbReference>
<dbReference type="InterPro" id="IPR029878">
    <property type="entry name" value="ROCK2_cat"/>
</dbReference>
<dbReference type="InterPro" id="IPR037311">
    <property type="entry name" value="ROCK2_HR1"/>
</dbReference>
<dbReference type="InterPro" id="IPR015008">
    <property type="entry name" value="ROCK_Rho-bd_dom"/>
</dbReference>
<dbReference type="InterPro" id="IPR008271">
    <property type="entry name" value="Ser/Thr_kinase_AS"/>
</dbReference>
<dbReference type="PANTHER" id="PTHR22988">
    <property type="entry name" value="MYOTONIC DYSTROPHY S/T KINASE-RELATED"/>
    <property type="match status" value="1"/>
</dbReference>
<dbReference type="PANTHER" id="PTHR22988:SF28">
    <property type="entry name" value="RHO-ASSOCIATED PROTEIN KINASE 2"/>
    <property type="match status" value="1"/>
</dbReference>
<dbReference type="Pfam" id="PF25346">
    <property type="entry name" value="PH_MRCK"/>
    <property type="match status" value="1"/>
</dbReference>
<dbReference type="Pfam" id="PF00069">
    <property type="entry name" value="Pkinase"/>
    <property type="match status" value="1"/>
</dbReference>
<dbReference type="Pfam" id="PF08912">
    <property type="entry name" value="Rho_Binding"/>
    <property type="match status" value="1"/>
</dbReference>
<dbReference type="PIRSF" id="PIRSF037568">
    <property type="entry name" value="Rho_kinase"/>
    <property type="match status" value="1"/>
</dbReference>
<dbReference type="SMART" id="SM00109">
    <property type="entry name" value="C1"/>
    <property type="match status" value="1"/>
</dbReference>
<dbReference type="SMART" id="SM00233">
    <property type="entry name" value="PH"/>
    <property type="match status" value="1"/>
</dbReference>
<dbReference type="SMART" id="SM00133">
    <property type="entry name" value="S_TK_X"/>
    <property type="match status" value="1"/>
</dbReference>
<dbReference type="SMART" id="SM00220">
    <property type="entry name" value="S_TKc"/>
    <property type="match status" value="1"/>
</dbReference>
<dbReference type="SUPFAM" id="SSF57889">
    <property type="entry name" value="Cysteine-rich domain"/>
    <property type="match status" value="1"/>
</dbReference>
<dbReference type="SUPFAM" id="SSF103652">
    <property type="entry name" value="G protein-binding domain"/>
    <property type="match status" value="1"/>
</dbReference>
<dbReference type="SUPFAM" id="SSF50729">
    <property type="entry name" value="PH domain-like"/>
    <property type="match status" value="1"/>
</dbReference>
<dbReference type="SUPFAM" id="SSF56112">
    <property type="entry name" value="Protein kinase-like (PK-like)"/>
    <property type="match status" value="1"/>
</dbReference>
<dbReference type="PROSITE" id="PS51285">
    <property type="entry name" value="AGC_KINASE_CTER"/>
    <property type="match status" value="1"/>
</dbReference>
<dbReference type="PROSITE" id="PS50003">
    <property type="entry name" value="PH_DOMAIN"/>
    <property type="match status" value="1"/>
</dbReference>
<dbReference type="PROSITE" id="PS00107">
    <property type="entry name" value="PROTEIN_KINASE_ATP"/>
    <property type="match status" value="1"/>
</dbReference>
<dbReference type="PROSITE" id="PS50011">
    <property type="entry name" value="PROTEIN_KINASE_DOM"/>
    <property type="match status" value="1"/>
</dbReference>
<dbReference type="PROSITE" id="PS00108">
    <property type="entry name" value="PROTEIN_KINASE_ST"/>
    <property type="match status" value="1"/>
</dbReference>
<dbReference type="PROSITE" id="PS51860">
    <property type="entry name" value="REM_1"/>
    <property type="match status" value="1"/>
</dbReference>
<dbReference type="PROSITE" id="PS51859">
    <property type="entry name" value="RHO_BD"/>
    <property type="match status" value="1"/>
</dbReference>
<dbReference type="PROSITE" id="PS50081">
    <property type="entry name" value="ZF_DAG_PE_2"/>
    <property type="match status" value="1"/>
</dbReference>
<sequence length="1388" mass="160900">MSRPPPTGKMPGAPETAPGDGAGASRQRKLEALIRDPRSPINVESLLDGLNSLVLDLDFPALRKNKNIDNFLNRYEKIVKKIRGLQMKAEDYDVVKVIGRGAFGEVQLVRHKASQKVYAMKLLSKFEMIKRSDSAFFWEERDIMAFANSPWVVQLFYAFQDDRYLYMVMEYMPGGDLVNLMSNYDVPEKWAKFYTAEVVLALDAIHSMGLIHRDVKPDNMLLDKHGHLKLADFGTCMKMDETGMVHCDTAVGTPDYISPEVLKSQGGDGFYGRECDWWSVGVFLYEMLVGDTPFYADSLVGTYSKIMDHKNSLCFPEDAEISKHAKNLICAFLTDREVRLGRNGVEEIRQHPFFKNDQWHWDNIRETAAPVVPELSSDIDSSNFDDIEDDKGDVETFPIPKAFVGNQLPFIGFTYYRENLLLSDSPSCRETDSIQSRKNEESQEIQKKLYTLEEHLSNEMQAKEELEQKCKSVNTRLEKTAKELEEEITLRKSVESALRQLEREKALLQHKNAEYQRKADHEADKKRNLENDVNSLKDQLEDLKKRNQNSQISTEKVNQLQRQLDETNALLRTESDTAARLRKTQAESSKQIQQLESNNRDLQDKNCLLETAKLKLEKEFINLQSALESERRDRTHGSEIINDLQGRICGLEEDLKNGKILLAKVELEKRQLQERFTDLEKEKSNMEIDMTYQLKVIQQSLEQEEAEHKATKARLADKNKIYESIEEAKSEAMKEMEKKLLEERTLKQKVENLLLEAEKRCSLLDCDLKQSQQKINELLKQKDVLNEDVRNLTLKIEQETQKRCLTQNDLKMQTQQVNTLKMSEKQLKQENNHLMEMKMNLEKQNAELRKERQDADGQMKELQDQLEAEQYFSTLYKTQVRELKEECEEKTKLGKELQQKKQELQDERDSLAAQLEITLTKADSEQLARSIAEEQYSDLEKEKIMKELEIKEMMARHKQELTEKDATIASLEETNRTLTSDVANLANEKEELNNKLKDVQEQLSRLKDEEISAAAIKAQFEKQLLTERTLKTQAVNKLAEIMNRKEPVKRGNDTDVRRKEKENRKLHMELKSEREKLTQQMIKYQKELNEMQAQIAEESQIRIELQMTLDSKDSDIEQLRSQLQALHIGLDSSSIGSGPGDAEADDGFPESRLEGWLSLPVRNNTKKFGWVKKYVIVSSKKILFYDSEQDKEQSNPYMVLDIDKLFHVRPVTQTDVYRADAKEIPRIFQILYANEGESKKEQEFPVEPVGEKSNYICHKGHEFIPTLYHFPTNCEACMKPLWHMFKPPPALECRRCHIKCHKDHMDKKEEIIAPCKVYYDISTAKNLLLLANSTEEQQKWVSRLVKKIPKKPPAPDPFARSSPRTSMKIQQNQSIRRPSRQLAPNKPS</sequence>
<name>ROCK2_HUMAN</name>
<feature type="chain" id="PRO_0000086625" description="Rho-associated protein kinase 2">
    <location>
        <begin position="1"/>
        <end position="1388"/>
    </location>
</feature>
<feature type="domain" description="Protein kinase" evidence="7">
    <location>
        <begin position="92"/>
        <end position="354"/>
    </location>
</feature>
<feature type="domain" description="AGC-kinase C-terminal" evidence="9">
    <location>
        <begin position="357"/>
        <end position="425"/>
    </location>
</feature>
<feature type="domain" description="REM-1" evidence="11">
    <location>
        <begin position="497"/>
        <end position="573"/>
    </location>
</feature>
<feature type="domain" description="RhoBD" evidence="10">
    <location>
        <begin position="979"/>
        <end position="1047"/>
    </location>
</feature>
<feature type="domain" description="PH" evidence="6">
    <location>
        <begin position="1150"/>
        <end position="1349"/>
    </location>
</feature>
<feature type="zinc finger region" description="Phorbol-ester/DAG-type" evidence="8">
    <location>
        <begin position="1260"/>
        <end position="1315"/>
    </location>
</feature>
<feature type="region of interest" description="Disordered" evidence="13">
    <location>
        <begin position="1"/>
        <end position="27"/>
    </location>
</feature>
<feature type="region of interest" description="Interaction with PPP1R12A">
    <location>
        <begin position="363"/>
        <end position="784"/>
    </location>
</feature>
<feature type="region of interest" description="Interaction with NPM1" evidence="17">
    <location>
        <begin position="373"/>
        <end position="420"/>
    </location>
</feature>
<feature type="region of interest" description="RHOA binding" evidence="1">
    <location>
        <begin position="979"/>
        <end position="1047"/>
    </location>
</feature>
<feature type="region of interest" description="Disordered" evidence="13">
    <location>
        <begin position="1345"/>
        <end position="1388"/>
    </location>
</feature>
<feature type="coiled-coil region" evidence="5">
    <location>
        <begin position="429"/>
        <end position="1024"/>
    </location>
</feature>
<feature type="coiled-coil region" evidence="5">
    <location>
        <begin position="1053"/>
        <end position="1131"/>
    </location>
</feature>
<feature type="compositionally biased region" description="Polar residues" evidence="13">
    <location>
        <begin position="1362"/>
        <end position="1376"/>
    </location>
</feature>
<feature type="active site" description="Proton acceptor" evidence="7 12">
    <location>
        <position position="214"/>
    </location>
</feature>
<feature type="binding site" evidence="7">
    <location>
        <begin position="98"/>
        <end position="106"/>
    </location>
    <ligand>
        <name>ATP</name>
        <dbReference type="ChEBI" id="CHEBI:30616"/>
    </ligand>
</feature>
<feature type="binding site" evidence="7">
    <location>
        <position position="121"/>
    </location>
    <ligand>
        <name>ATP</name>
        <dbReference type="ChEBI" id="CHEBI:30616"/>
    </ligand>
</feature>
<feature type="site" description="Cleavage; by granzyme B">
    <location>
        <begin position="1131"/>
        <end position="1132"/>
    </location>
</feature>
<feature type="modified residue" description="Phosphothreonine; by ROCK2" evidence="4">
    <location>
        <position position="414"/>
    </location>
</feature>
<feature type="modified residue" description="Phosphotyrosine; by SRC" evidence="19 23">
    <location>
        <position position="722"/>
    </location>
</feature>
<feature type="modified residue" description="Phosphoserine" evidence="29 30 31 32 33">
    <location>
        <position position="1137"/>
    </location>
</feature>
<feature type="modified residue" description="Phosphothreonine" evidence="34">
    <location>
        <position position="1212"/>
    </location>
</feature>
<feature type="modified residue" description="Phosphoserine" evidence="34">
    <location>
        <position position="1362"/>
    </location>
</feature>
<feature type="modified residue" description="Phosphoserine" evidence="34">
    <location>
        <position position="1374"/>
    </location>
</feature>
<feature type="sequence variant" id="VAR_041062" description="In dbSNP:rs2230774." evidence="18 26 27">
    <original>T</original>
    <variation>N</variation>
    <location>
        <position position="431"/>
    </location>
</feature>
<feature type="sequence variant" id="VAR_041063" description="In dbSNP:rs35768389." evidence="18">
    <original>D</original>
    <variation>V</variation>
    <location>
        <position position="601"/>
    </location>
</feature>
<feature type="sequence variant" id="VAR_057110" description="In dbSNP:rs34945852.">
    <original>K</original>
    <variation>M</variation>
    <location>
        <position position="1083"/>
    </location>
</feature>
<feature type="sequence variant" id="VAR_041064" description="In a metastatic melanoma sample; somatic mutation." evidence="18">
    <original>S</original>
    <variation>P</variation>
    <location>
        <position position="1194"/>
    </location>
</feature>
<feature type="mutagenesis site" description="Abolishes cleavage by granzyme B." evidence="15">
    <original>D</original>
    <variation>A</variation>
    <location>
        <position position="1131"/>
    </location>
</feature>
<feature type="sequence conflict" description="In Ref. 1; BAA75636." evidence="28" ref="1">
    <original>R</original>
    <variation>K</variation>
    <location>
        <position position="83"/>
    </location>
</feature>
<feature type="helix" evidence="38">
    <location>
        <begin position="31"/>
        <end position="35"/>
    </location>
</feature>
<feature type="strand" evidence="36">
    <location>
        <begin position="39"/>
        <end position="42"/>
    </location>
</feature>
<feature type="helix" evidence="38">
    <location>
        <begin position="43"/>
        <end position="57"/>
    </location>
</feature>
<feature type="helix" evidence="38">
    <location>
        <begin position="62"/>
        <end position="64"/>
    </location>
</feature>
<feature type="helix" evidence="38">
    <location>
        <begin position="66"/>
        <end position="85"/>
    </location>
</feature>
<feature type="helix" evidence="38">
    <location>
        <begin position="89"/>
        <end position="91"/>
    </location>
</feature>
<feature type="strand" evidence="38">
    <location>
        <begin position="92"/>
        <end position="101"/>
    </location>
</feature>
<feature type="strand" evidence="38">
    <location>
        <begin position="104"/>
        <end position="111"/>
    </location>
</feature>
<feature type="turn" evidence="38">
    <location>
        <begin position="112"/>
        <end position="114"/>
    </location>
</feature>
<feature type="strand" evidence="38">
    <location>
        <begin position="117"/>
        <end position="124"/>
    </location>
</feature>
<feature type="helix" evidence="38">
    <location>
        <begin position="125"/>
        <end position="130"/>
    </location>
</feature>
<feature type="helix" evidence="38">
    <location>
        <begin position="137"/>
        <end position="146"/>
    </location>
</feature>
<feature type="strand" evidence="38">
    <location>
        <begin position="155"/>
        <end position="160"/>
    </location>
</feature>
<feature type="strand" evidence="38">
    <location>
        <begin position="162"/>
        <end position="169"/>
    </location>
</feature>
<feature type="helix" evidence="38">
    <location>
        <begin position="177"/>
        <end position="183"/>
    </location>
</feature>
<feature type="helix" evidence="38">
    <location>
        <begin position="188"/>
        <end position="207"/>
    </location>
</feature>
<feature type="strand" evidence="37">
    <location>
        <begin position="210"/>
        <end position="212"/>
    </location>
</feature>
<feature type="helix" evidence="38">
    <location>
        <begin position="217"/>
        <end position="219"/>
    </location>
</feature>
<feature type="strand" evidence="38">
    <location>
        <begin position="220"/>
        <end position="222"/>
    </location>
</feature>
<feature type="strand" evidence="38">
    <location>
        <begin position="228"/>
        <end position="230"/>
    </location>
</feature>
<feature type="helix" evidence="37">
    <location>
        <begin position="233"/>
        <end position="235"/>
    </location>
</feature>
<feature type="strand" evidence="37">
    <location>
        <begin position="236"/>
        <end position="238"/>
    </location>
</feature>
<feature type="strand" evidence="38">
    <location>
        <begin position="243"/>
        <end position="247"/>
    </location>
</feature>
<feature type="helix" evidence="38">
    <location>
        <begin position="254"/>
        <end position="256"/>
    </location>
</feature>
<feature type="helix" evidence="38">
    <location>
        <begin position="259"/>
        <end position="263"/>
    </location>
</feature>
<feature type="turn" evidence="38">
    <location>
        <begin position="264"/>
        <end position="268"/>
    </location>
</feature>
<feature type="strand" evidence="38">
    <location>
        <begin position="269"/>
        <end position="272"/>
    </location>
</feature>
<feature type="helix" evidence="38">
    <location>
        <begin position="274"/>
        <end position="289"/>
    </location>
</feature>
<feature type="helix" evidence="38">
    <location>
        <begin position="299"/>
        <end position="307"/>
    </location>
</feature>
<feature type="helix" evidence="38">
    <location>
        <begin position="309"/>
        <end position="312"/>
    </location>
</feature>
<feature type="turn" evidence="35">
    <location>
        <begin position="317"/>
        <end position="319"/>
    </location>
</feature>
<feature type="helix" evidence="38">
    <location>
        <begin position="323"/>
        <end position="332"/>
    </location>
</feature>
<feature type="helix" evidence="38">
    <location>
        <begin position="336"/>
        <end position="338"/>
    </location>
</feature>
<feature type="turn" evidence="38">
    <location>
        <begin position="340"/>
        <end position="343"/>
    </location>
</feature>
<feature type="helix" evidence="38">
    <location>
        <begin position="346"/>
        <end position="349"/>
    </location>
</feature>
<feature type="helix" evidence="38">
    <location>
        <begin position="352"/>
        <end position="354"/>
    </location>
</feature>
<feature type="turn" evidence="38">
    <location>
        <begin position="361"/>
        <end position="363"/>
    </location>
</feature>
<feature type="helix" evidence="38">
    <location>
        <begin position="364"/>
        <end position="366"/>
    </location>
</feature>
<feature type="helix" evidence="38">
    <location>
        <begin position="408"/>
        <end position="410"/>
    </location>
</feature>
<evidence type="ECO:0000250" key="1"/>
<evidence type="ECO:0000250" key="2">
    <source>
        <dbReference type="UniProtKB" id="P70336"/>
    </source>
</evidence>
<evidence type="ECO:0000250" key="3">
    <source>
        <dbReference type="UniProtKB" id="Q28021"/>
    </source>
</evidence>
<evidence type="ECO:0000250" key="4">
    <source>
        <dbReference type="UniProtKB" id="Q62868"/>
    </source>
</evidence>
<evidence type="ECO:0000255" key="5"/>
<evidence type="ECO:0000255" key="6">
    <source>
        <dbReference type="PROSITE-ProRule" id="PRU00145"/>
    </source>
</evidence>
<evidence type="ECO:0000255" key="7">
    <source>
        <dbReference type="PROSITE-ProRule" id="PRU00159"/>
    </source>
</evidence>
<evidence type="ECO:0000255" key="8">
    <source>
        <dbReference type="PROSITE-ProRule" id="PRU00226"/>
    </source>
</evidence>
<evidence type="ECO:0000255" key="9">
    <source>
        <dbReference type="PROSITE-ProRule" id="PRU00618"/>
    </source>
</evidence>
<evidence type="ECO:0000255" key="10">
    <source>
        <dbReference type="PROSITE-ProRule" id="PRU01206"/>
    </source>
</evidence>
<evidence type="ECO:0000255" key="11">
    <source>
        <dbReference type="PROSITE-ProRule" id="PRU01207"/>
    </source>
</evidence>
<evidence type="ECO:0000255" key="12">
    <source>
        <dbReference type="PROSITE-ProRule" id="PRU10027"/>
    </source>
</evidence>
<evidence type="ECO:0000256" key="13">
    <source>
        <dbReference type="SAM" id="MobiDB-lite"/>
    </source>
</evidence>
<evidence type="ECO:0000269" key="14">
    <source>
    </source>
</evidence>
<evidence type="ECO:0000269" key="15">
    <source>
    </source>
</evidence>
<evidence type="ECO:0000269" key="16">
    <source>
    </source>
</evidence>
<evidence type="ECO:0000269" key="17">
    <source>
    </source>
</evidence>
<evidence type="ECO:0000269" key="18">
    <source>
    </source>
</evidence>
<evidence type="ECO:0000269" key="19">
    <source>
    </source>
</evidence>
<evidence type="ECO:0000269" key="20">
    <source>
    </source>
</evidence>
<evidence type="ECO:0000269" key="21">
    <source>
    </source>
</evidence>
<evidence type="ECO:0000269" key="22">
    <source>
    </source>
</evidence>
<evidence type="ECO:0000269" key="23">
    <source>
    </source>
</evidence>
<evidence type="ECO:0000269" key="24">
    <source>
    </source>
</evidence>
<evidence type="ECO:0000269" key="25">
    <source>
    </source>
</evidence>
<evidence type="ECO:0000269" key="26">
    <source>
    </source>
</evidence>
<evidence type="ECO:0000269" key="27">
    <source>
    </source>
</evidence>
<evidence type="ECO:0000305" key="28"/>
<evidence type="ECO:0007744" key="29">
    <source>
    </source>
</evidence>
<evidence type="ECO:0007744" key="30">
    <source>
    </source>
</evidence>
<evidence type="ECO:0007744" key="31">
    <source>
    </source>
</evidence>
<evidence type="ECO:0007744" key="32">
    <source>
    </source>
</evidence>
<evidence type="ECO:0007744" key="33">
    <source>
    </source>
</evidence>
<evidence type="ECO:0007744" key="34">
    <source>
    </source>
</evidence>
<evidence type="ECO:0007829" key="35">
    <source>
        <dbReference type="PDB" id="6P5M"/>
    </source>
</evidence>
<evidence type="ECO:0007829" key="36">
    <source>
        <dbReference type="PDB" id="8GDS"/>
    </source>
</evidence>
<evidence type="ECO:0007829" key="37">
    <source>
        <dbReference type="PDB" id="8X8Y"/>
    </source>
</evidence>
<evidence type="ECO:0007829" key="38">
    <source>
        <dbReference type="PDB" id="8X92"/>
    </source>
</evidence>
<accession>O75116</accession>
<accession>Q53QZ0</accession>
<accession>Q53SJ7</accession>
<accession>Q9UQN5</accession>